<gene>
    <name type="primary">RIPOR1</name>
    <name type="synonym">FAM65A</name>
    <name type="synonym">KIAA1930</name>
</gene>
<feature type="chain" id="PRO_0000289110" description="Rho family-interacting cell polarization regulator 1">
    <location>
        <begin position="1"/>
        <end position="1223"/>
    </location>
</feature>
<feature type="region of interest" description="Disordered" evidence="4">
    <location>
        <begin position="375"/>
        <end position="411"/>
    </location>
</feature>
<feature type="region of interest" description="Disordered" evidence="4">
    <location>
        <begin position="475"/>
        <end position="769"/>
    </location>
</feature>
<feature type="region of interest" description="Disordered" evidence="4">
    <location>
        <begin position="856"/>
        <end position="889"/>
    </location>
</feature>
<feature type="coiled-coil region" evidence="3">
    <location>
        <begin position="89"/>
        <end position="114"/>
    </location>
</feature>
<feature type="compositionally biased region" description="Low complexity" evidence="4">
    <location>
        <begin position="380"/>
        <end position="395"/>
    </location>
</feature>
<feature type="compositionally biased region" description="Low complexity" evidence="4">
    <location>
        <begin position="505"/>
        <end position="523"/>
    </location>
</feature>
<feature type="compositionally biased region" description="Low complexity" evidence="4">
    <location>
        <begin position="546"/>
        <end position="564"/>
    </location>
</feature>
<feature type="compositionally biased region" description="Polar residues" evidence="4">
    <location>
        <begin position="565"/>
        <end position="592"/>
    </location>
</feature>
<feature type="compositionally biased region" description="Low complexity" evidence="4">
    <location>
        <begin position="601"/>
        <end position="650"/>
    </location>
</feature>
<feature type="compositionally biased region" description="Low complexity" evidence="4">
    <location>
        <begin position="659"/>
        <end position="675"/>
    </location>
</feature>
<feature type="compositionally biased region" description="Polar residues" evidence="4">
    <location>
        <begin position="680"/>
        <end position="695"/>
    </location>
</feature>
<feature type="compositionally biased region" description="Acidic residues" evidence="4">
    <location>
        <begin position="858"/>
        <end position="867"/>
    </location>
</feature>
<feature type="modified residue" description="Phosphoserine" evidence="11">
    <location>
        <position position="22"/>
    </location>
</feature>
<feature type="modified residue" description="Phosphoserine" evidence="9">
    <location>
        <position position="349"/>
    </location>
</feature>
<feature type="modified residue" description="Phosphoserine" evidence="9 10 11">
    <location>
        <position position="351"/>
    </location>
</feature>
<feature type="modified residue" description="Phosphothreonine" evidence="9">
    <location>
        <position position="355"/>
    </location>
</feature>
<feature type="modified residue" description="Phosphoserine" evidence="1">
    <location>
        <position position="456"/>
    </location>
</feature>
<feature type="modified residue" description="Phosphoserine" evidence="1">
    <location>
        <position position="459"/>
    </location>
</feature>
<feature type="modified residue" description="Phosphoserine" evidence="2">
    <location>
        <position position="874"/>
    </location>
</feature>
<feature type="modified residue" description="Phosphoserine" evidence="2">
    <location>
        <position position="875"/>
    </location>
</feature>
<feature type="splice variant" id="VSP_043315" description="In isoform 3." evidence="7">
    <original>M</original>
    <variation>MNTKKRGSPARTHSM</variation>
    <location>
        <position position="1"/>
    </location>
</feature>
<feature type="splice variant" id="VSP_045002" description="In isoform 4." evidence="7">
    <original>M</original>
    <variation>MTIWQMQKQAQRGSPARTHSM</variation>
    <location>
        <position position="1"/>
    </location>
</feature>
<feature type="splice variant" id="VSP_025903" description="In isoform 2, isoform 3 and isoform 4." evidence="6 7">
    <location>
        <begin position="35"/>
        <end position="38"/>
    </location>
</feature>
<feature type="sequence conflict" description="In Ref. 1; BAG57170." evidence="8" ref="1">
    <original>V</original>
    <variation>A</variation>
    <location>
        <position position="152"/>
    </location>
</feature>
<feature type="sequence conflict" description="In Ref. 1; BAB14678." evidence="8" ref="1">
    <original>G</original>
    <variation>S</variation>
    <location>
        <position position="653"/>
    </location>
</feature>
<feature type="sequence conflict" description="In Ref. 1; BAG57170." evidence="8" ref="1">
    <original>A</original>
    <variation>T</variation>
    <location>
        <position position="766"/>
    </location>
</feature>
<feature type="sequence conflict" description="In Ref. 3; BAB67823." evidence="8" ref="3">
    <location>
        <position position="831"/>
    </location>
</feature>
<feature type="sequence conflict" description="In Ref. 1; BAB14678." evidence="8" ref="1">
    <original>A</original>
    <variation>T</variation>
    <location>
        <position position="1012"/>
    </location>
</feature>
<dbReference type="EMBL" id="AK023787">
    <property type="protein sequence ID" value="BAB14678.1"/>
    <property type="status" value="ALT_SEQ"/>
    <property type="molecule type" value="mRNA"/>
</dbReference>
<dbReference type="EMBL" id="AK293748">
    <property type="protein sequence ID" value="BAG57170.1"/>
    <property type="molecule type" value="mRNA"/>
</dbReference>
<dbReference type="EMBL" id="AK295677">
    <property type="protein sequence ID" value="BAG58534.1"/>
    <property type="molecule type" value="mRNA"/>
</dbReference>
<dbReference type="EMBL" id="AC027682">
    <property type="status" value="NOT_ANNOTATED_CDS"/>
    <property type="molecule type" value="Genomic_DNA"/>
</dbReference>
<dbReference type="EMBL" id="AK127792">
    <property type="protein sequence ID" value="BAC87139.1"/>
    <property type="molecule type" value="mRNA"/>
</dbReference>
<dbReference type="EMBL" id="AB067517">
    <property type="protein sequence ID" value="BAB67823.1"/>
    <property type="status" value="ALT_FRAME"/>
    <property type="molecule type" value="mRNA"/>
</dbReference>
<dbReference type="EMBL" id="BC001850">
    <property type="protein sequence ID" value="AAH01850.3"/>
    <property type="molecule type" value="mRNA"/>
</dbReference>
<dbReference type="EMBL" id="BC054512">
    <property type="protein sequence ID" value="AAH54512.1"/>
    <property type="molecule type" value="mRNA"/>
</dbReference>
<dbReference type="EMBL" id="BC098587">
    <property type="protein sequence ID" value="AAH98587.1"/>
    <property type="molecule type" value="mRNA"/>
</dbReference>
<dbReference type="EMBL" id="AL834312">
    <property type="protein sequence ID" value="CAD38982.1"/>
    <property type="molecule type" value="mRNA"/>
</dbReference>
<dbReference type="CCDS" id="CCDS10840.1">
    <molecule id="Q6ZS17-2"/>
</dbReference>
<dbReference type="CCDS" id="CCDS54026.1">
    <molecule id="Q6ZS17-4"/>
</dbReference>
<dbReference type="CCDS" id="CCDS54027.1">
    <molecule id="Q6ZS17-3"/>
</dbReference>
<dbReference type="CCDS" id="CCDS54028.1">
    <molecule id="Q6ZS17-1"/>
</dbReference>
<dbReference type="RefSeq" id="NP_001180451.1">
    <molecule id="Q6ZS17-1"/>
    <property type="nucleotide sequence ID" value="NM_001193522.2"/>
</dbReference>
<dbReference type="RefSeq" id="NP_001180452.1">
    <molecule id="Q6ZS17-4"/>
    <property type="nucleotide sequence ID" value="NM_001193523.2"/>
</dbReference>
<dbReference type="RefSeq" id="NP_001180453.1">
    <molecule id="Q6ZS17-3"/>
    <property type="nucleotide sequence ID" value="NM_001193524.2"/>
</dbReference>
<dbReference type="RefSeq" id="NP_078795.2">
    <molecule id="Q6ZS17-2"/>
    <property type="nucleotide sequence ID" value="NM_024519.3"/>
</dbReference>
<dbReference type="SMR" id="Q6ZS17"/>
<dbReference type="BioGRID" id="122715">
    <property type="interactions" value="24"/>
</dbReference>
<dbReference type="FunCoup" id="Q6ZS17">
    <property type="interactions" value="338"/>
</dbReference>
<dbReference type="IntAct" id="Q6ZS17">
    <property type="interactions" value="12"/>
</dbReference>
<dbReference type="MINT" id="Q6ZS17"/>
<dbReference type="STRING" id="9606.ENSP00000400099"/>
<dbReference type="GlyGen" id="Q6ZS17">
    <property type="glycosylation" value="4 sites, 1 O-linked glycan (1 site)"/>
</dbReference>
<dbReference type="iPTMnet" id="Q6ZS17"/>
<dbReference type="PhosphoSitePlus" id="Q6ZS17"/>
<dbReference type="BioMuta" id="RIPOR1"/>
<dbReference type="DMDM" id="74711310"/>
<dbReference type="jPOST" id="Q6ZS17"/>
<dbReference type="MassIVE" id="Q6ZS17"/>
<dbReference type="PaxDb" id="9606-ENSP00000400099"/>
<dbReference type="PeptideAtlas" id="Q6ZS17"/>
<dbReference type="ProteomicsDB" id="19285"/>
<dbReference type="ProteomicsDB" id="68182">
    <molecule id="Q6ZS17-1"/>
</dbReference>
<dbReference type="ProteomicsDB" id="68183">
    <molecule id="Q6ZS17-2"/>
</dbReference>
<dbReference type="ProteomicsDB" id="68184">
    <molecule id="Q6ZS17-3"/>
</dbReference>
<dbReference type="Pumba" id="Q6ZS17"/>
<dbReference type="Antibodypedia" id="941">
    <property type="antibodies" value="37 antibodies from 14 providers"/>
</dbReference>
<dbReference type="DNASU" id="79567"/>
<dbReference type="Ensembl" id="ENST00000042381.9">
    <molecule id="Q6ZS17-2"/>
    <property type="protein sequence ID" value="ENSP00000042381.4"/>
    <property type="gene ID" value="ENSG00000039523.20"/>
</dbReference>
<dbReference type="Ensembl" id="ENST00000379312.7">
    <molecule id="Q6ZS17-1"/>
    <property type="protein sequence ID" value="ENSP00000368614.3"/>
    <property type="gene ID" value="ENSG00000039523.20"/>
</dbReference>
<dbReference type="Ensembl" id="ENST00000422602.8">
    <molecule id="Q6ZS17-4"/>
    <property type="protein sequence ID" value="ENSP00000400099.2"/>
    <property type="gene ID" value="ENSG00000039523.20"/>
</dbReference>
<dbReference type="Ensembl" id="ENST00000428437.6">
    <molecule id="Q6ZS17-3"/>
    <property type="protein sequence ID" value="ENSP00000389456.2"/>
    <property type="gene ID" value="ENSG00000039523.20"/>
</dbReference>
<dbReference type="GeneID" id="79567"/>
<dbReference type="KEGG" id="hsa:79567"/>
<dbReference type="MANE-Select" id="ENST00000042381.9">
    <molecule id="Q6ZS17-2"/>
    <property type="protein sequence ID" value="ENSP00000042381.4"/>
    <property type="RefSeq nucleotide sequence ID" value="NM_024519.4"/>
    <property type="RefSeq protein sequence ID" value="NP_078795.2"/>
</dbReference>
<dbReference type="UCSC" id="uc002eth.4">
    <molecule id="Q6ZS17-1"/>
    <property type="organism name" value="human"/>
</dbReference>
<dbReference type="AGR" id="HGNC:25836"/>
<dbReference type="CTD" id="79567"/>
<dbReference type="DisGeNET" id="79567"/>
<dbReference type="GeneCards" id="RIPOR1"/>
<dbReference type="HGNC" id="HGNC:25836">
    <property type="gene designation" value="RIPOR1"/>
</dbReference>
<dbReference type="HPA" id="ENSG00000039523">
    <property type="expression patterns" value="Low tissue specificity"/>
</dbReference>
<dbReference type="MIM" id="619842">
    <property type="type" value="gene"/>
</dbReference>
<dbReference type="neXtProt" id="NX_Q6ZS17"/>
<dbReference type="OpenTargets" id="ENSG00000039523"/>
<dbReference type="PharmGKB" id="PA142671875"/>
<dbReference type="VEuPathDB" id="HostDB:ENSG00000039523"/>
<dbReference type="eggNOG" id="ENOG502QQ7T">
    <property type="taxonomic scope" value="Eukaryota"/>
</dbReference>
<dbReference type="GeneTree" id="ENSGT00940000153717"/>
<dbReference type="HOGENOM" id="CLU_006211_0_0_1"/>
<dbReference type="InParanoid" id="Q6ZS17"/>
<dbReference type="OrthoDB" id="9999654at2759"/>
<dbReference type="PAN-GO" id="Q6ZS17">
    <property type="GO annotations" value="1 GO annotation based on evolutionary models"/>
</dbReference>
<dbReference type="PhylomeDB" id="Q6ZS17"/>
<dbReference type="TreeFam" id="TF329332"/>
<dbReference type="PathwayCommons" id="Q6ZS17"/>
<dbReference type="SignaLink" id="Q6ZS17"/>
<dbReference type="BioGRID-ORCS" id="79567">
    <property type="hits" value="20 hits in 1157 CRISPR screens"/>
</dbReference>
<dbReference type="ChiTaRS" id="FAM65A">
    <property type="organism name" value="human"/>
</dbReference>
<dbReference type="GenomeRNAi" id="79567"/>
<dbReference type="Pharos" id="Q6ZS17">
    <property type="development level" value="Tbio"/>
</dbReference>
<dbReference type="PRO" id="PR:Q6ZS17"/>
<dbReference type="Proteomes" id="UP000005640">
    <property type="component" value="Chromosome 16"/>
</dbReference>
<dbReference type="RNAct" id="Q6ZS17">
    <property type="molecule type" value="protein"/>
</dbReference>
<dbReference type="Bgee" id="ENSG00000039523">
    <property type="expression patterns" value="Expressed in apex of heart and 191 other cell types or tissues"/>
</dbReference>
<dbReference type="ExpressionAtlas" id="Q6ZS17">
    <property type="expression patterns" value="baseline and differential"/>
</dbReference>
<dbReference type="GO" id="GO:0031252">
    <property type="term" value="C:cell leading edge"/>
    <property type="evidence" value="ECO:0000314"/>
    <property type="project" value="UniProtKB"/>
</dbReference>
<dbReference type="GO" id="GO:0005737">
    <property type="term" value="C:cytoplasm"/>
    <property type="evidence" value="ECO:0000314"/>
    <property type="project" value="UniProtKB"/>
</dbReference>
<dbReference type="GO" id="GO:0005829">
    <property type="term" value="C:cytosol"/>
    <property type="evidence" value="ECO:0000314"/>
    <property type="project" value="HPA"/>
</dbReference>
<dbReference type="GO" id="GO:0070062">
    <property type="term" value="C:extracellular exosome"/>
    <property type="evidence" value="ECO:0007005"/>
    <property type="project" value="UniProtKB"/>
</dbReference>
<dbReference type="GO" id="GO:0005794">
    <property type="term" value="C:Golgi apparatus"/>
    <property type="evidence" value="ECO:0000314"/>
    <property type="project" value="HPA"/>
</dbReference>
<dbReference type="GO" id="GO:0016020">
    <property type="term" value="C:membrane"/>
    <property type="evidence" value="ECO:0000314"/>
    <property type="project" value="UniProtKB"/>
</dbReference>
<dbReference type="GO" id="GO:0012506">
    <property type="term" value="C:vesicle membrane"/>
    <property type="evidence" value="ECO:0000304"/>
    <property type="project" value="UniProtKB"/>
</dbReference>
<dbReference type="GO" id="GO:0071889">
    <property type="term" value="F:14-3-3 protein binding"/>
    <property type="evidence" value="ECO:0000314"/>
    <property type="project" value="UniProtKB"/>
</dbReference>
<dbReference type="GO" id="GO:1990869">
    <property type="term" value="P:cellular response to chemokine"/>
    <property type="evidence" value="ECO:0000315"/>
    <property type="project" value="UniProtKB"/>
</dbReference>
<dbReference type="GO" id="GO:0009267">
    <property type="term" value="P:cellular response to starvation"/>
    <property type="evidence" value="ECO:0000315"/>
    <property type="project" value="UniProtKB"/>
</dbReference>
<dbReference type="GO" id="GO:0051683">
    <property type="term" value="P:establishment of Golgi localization"/>
    <property type="evidence" value="ECO:0000315"/>
    <property type="project" value="UniProtKB"/>
</dbReference>
<dbReference type="GO" id="GO:2001107">
    <property type="term" value="P:negative regulation of Rho guanyl-nucleotide exchange factor activity"/>
    <property type="evidence" value="ECO:0000315"/>
    <property type="project" value="UniProtKB"/>
</dbReference>
<dbReference type="GO" id="GO:0035024">
    <property type="term" value="P:negative regulation of Rho protein signal transduction"/>
    <property type="evidence" value="ECO:0000315"/>
    <property type="project" value="UniProtKB"/>
</dbReference>
<dbReference type="GO" id="GO:0030335">
    <property type="term" value="P:positive regulation of cell migration"/>
    <property type="evidence" value="ECO:0000315"/>
    <property type="project" value="UniProtKB"/>
</dbReference>
<dbReference type="GO" id="GO:0090316">
    <property type="term" value="P:positive regulation of intracellular protein transport"/>
    <property type="evidence" value="ECO:0000315"/>
    <property type="project" value="UniProtKB"/>
</dbReference>
<dbReference type="GO" id="GO:0034067">
    <property type="term" value="P:protein localization to Golgi apparatus"/>
    <property type="evidence" value="ECO:0000315"/>
    <property type="project" value="UniProtKB"/>
</dbReference>
<dbReference type="GO" id="GO:0009611">
    <property type="term" value="P:response to wounding"/>
    <property type="evidence" value="ECO:0000315"/>
    <property type="project" value="UniProtKB"/>
</dbReference>
<dbReference type="GO" id="GO:0007266">
    <property type="term" value="P:Rho protein signal transduction"/>
    <property type="evidence" value="ECO:0000315"/>
    <property type="project" value="UniProtKB"/>
</dbReference>
<dbReference type="FunFam" id="1.25.10.10:FF:000089">
    <property type="entry name" value="Rho family-interacting cell polarization regulator 1"/>
    <property type="match status" value="1"/>
</dbReference>
<dbReference type="Gene3D" id="1.25.10.10">
    <property type="entry name" value="Leucine-rich Repeat Variant"/>
    <property type="match status" value="1"/>
</dbReference>
<dbReference type="InterPro" id="IPR011989">
    <property type="entry name" value="ARM-like"/>
</dbReference>
<dbReference type="InterPro" id="IPR016024">
    <property type="entry name" value="ARM-type_fold"/>
</dbReference>
<dbReference type="InterPro" id="IPR031780">
    <property type="entry name" value="FAM65_N"/>
</dbReference>
<dbReference type="InterPro" id="IPR026136">
    <property type="entry name" value="RIPOR3"/>
</dbReference>
<dbReference type="PANTHER" id="PTHR15829">
    <property type="entry name" value="PROTEIN KINASE PKN/PRK1, EFFECTOR"/>
    <property type="match status" value="1"/>
</dbReference>
<dbReference type="PANTHER" id="PTHR15829:SF1">
    <property type="entry name" value="RHO FAMILY-INTERACTING CELL POLARIZATION REGULATOR 1"/>
    <property type="match status" value="1"/>
</dbReference>
<dbReference type="Pfam" id="PF15903">
    <property type="entry name" value="PL48"/>
    <property type="match status" value="1"/>
</dbReference>
<dbReference type="SUPFAM" id="SSF48371">
    <property type="entry name" value="ARM repeat"/>
    <property type="match status" value="1"/>
</dbReference>
<accession>Q6ZS17</accession>
<accession>B4DEQ9</accession>
<accession>B4DIM2</accession>
<accession>E9PBS3</accession>
<accession>Q4G0A4</accession>
<accession>Q7Z5R7</accession>
<accession>Q8NDA4</accession>
<accession>Q96J39</accession>
<accession>Q96PV8</accession>
<accession>Q9H8D9</accession>
<evidence type="ECO:0000250" key="1">
    <source>
        <dbReference type="UniProtKB" id="Q4FZU8"/>
    </source>
</evidence>
<evidence type="ECO:0000250" key="2">
    <source>
        <dbReference type="UniProtKB" id="Q68FE6"/>
    </source>
</evidence>
<evidence type="ECO:0000255" key="3"/>
<evidence type="ECO:0000256" key="4">
    <source>
        <dbReference type="SAM" id="MobiDB-lite"/>
    </source>
</evidence>
<evidence type="ECO:0000269" key="5">
    <source>
    </source>
</evidence>
<evidence type="ECO:0000303" key="6">
    <source>
    </source>
</evidence>
<evidence type="ECO:0000303" key="7">
    <source>
    </source>
</evidence>
<evidence type="ECO:0000305" key="8"/>
<evidence type="ECO:0007744" key="9">
    <source>
    </source>
</evidence>
<evidence type="ECO:0007744" key="10">
    <source>
    </source>
</evidence>
<evidence type="ECO:0007744" key="11">
    <source>
    </source>
</evidence>
<proteinExistence type="evidence at protein level"/>
<protein>
    <recommendedName>
        <fullName>Rho family-interacting cell polarization regulator 1</fullName>
    </recommendedName>
</protein>
<organism>
    <name type="scientific">Homo sapiens</name>
    <name type="common">Human</name>
    <dbReference type="NCBI Taxonomy" id="9606"/>
    <lineage>
        <taxon>Eukaryota</taxon>
        <taxon>Metazoa</taxon>
        <taxon>Chordata</taxon>
        <taxon>Craniata</taxon>
        <taxon>Vertebrata</taxon>
        <taxon>Euteleostomi</taxon>
        <taxon>Mammalia</taxon>
        <taxon>Eutheria</taxon>
        <taxon>Euarchontoglires</taxon>
        <taxon>Primates</taxon>
        <taxon>Haplorrhini</taxon>
        <taxon>Catarrhini</taxon>
        <taxon>Hominidae</taxon>
        <taxon>Homo</taxon>
    </lineage>
</organism>
<comment type="function">
    <text evidence="5">Downstream effector protein for Rho-type small GTPases that plays a role in cell polarity and directional migration (PubMed:27807006). Acts as an adapter protein, linking active Rho proteins to STK24 and STK26 kinases, and hence positively regulates Golgi reorientation in polarized cell migration upon Rho activation (PubMed:27807006). Involved in the subcellular relocation of STK26 from the Golgi to cytoplasm punctae in a Rho- and PDCD10-dependent manner upon serum stimulation (PubMed:27807006).</text>
</comment>
<comment type="subunit">
    <text evidence="5">Interacts (via N-terminus) with RHOA (GTP-bound form); this interaction links active RHOA to STK24 and STK26 kinases (PubMed:27807006). Interacts with RHOB (PubMed:27807006). Interacts with RHOC (PubMed:27807006). Interacts (via C-terminus) with PDCD10; this interaction occurs in a Rho-independent manner (PubMed:27807006). Interacts (via C-terminus) with STK24; this interaction occurs in a PDCD10-dependent and Rho-independent manner (PubMed:27807006). Interacts (via C-terminus) with STK26; this interaction occurs in a PDCD10-dependent and Rho-independent manner (PubMed:27807006). Interacts (via N-terminus) with 14-3-3 proteins; these interactions occur in a Rho-dependent manner (PubMed:27807006).</text>
</comment>
<comment type="subcellular location">
    <subcellularLocation>
        <location evidence="5">Cytoplasm</location>
    </subcellularLocation>
    <subcellularLocation>
        <location evidence="5">Golgi apparatus</location>
    </subcellularLocation>
    <text evidence="2 5">Localizes to the podocyte major processes and cell body (By similarity). Colocalized with STK26 in the Golgi of serum-starved cells and relocated to cytoplasmic punctae, probably vesicular compartments, along with STK26 upon serum stimulation in a Rho- and PDCD10-dependent manner (PubMed:27807006).</text>
</comment>
<comment type="alternative products">
    <event type="alternative splicing"/>
    <isoform>
        <id>Q6ZS17-1</id>
        <name>1</name>
        <sequence type="displayed"/>
    </isoform>
    <isoform>
        <id>Q6ZS17-2</id>
        <name>2</name>
        <sequence type="described" ref="VSP_025903"/>
    </isoform>
    <isoform>
        <id>Q6ZS17-3</id>
        <name>3</name>
        <sequence type="described" ref="VSP_043315 VSP_025903"/>
    </isoform>
    <isoform>
        <id>Q6ZS17-4</id>
        <name>4</name>
        <sequence type="described" ref="VSP_045002 VSP_025903"/>
    </isoform>
</comment>
<comment type="similarity">
    <text evidence="8">Belongs to the RIPOR family.</text>
</comment>
<comment type="sequence caution" evidence="8">
    <conflict type="erroneous termination">
        <sequence resource="EMBL-CDS" id="BAB14678"/>
    </conflict>
    <text>Truncated C-terminus.</text>
</comment>
<comment type="sequence caution" evidence="8">
    <conflict type="frameshift">
        <sequence resource="EMBL-CDS" id="BAB67823"/>
    </conflict>
</comment>
<reference key="1">
    <citation type="journal article" date="2004" name="Nat. Genet.">
        <title>Complete sequencing and characterization of 21,243 full-length human cDNAs.</title>
        <authorList>
            <person name="Ota T."/>
            <person name="Suzuki Y."/>
            <person name="Nishikawa T."/>
            <person name="Otsuki T."/>
            <person name="Sugiyama T."/>
            <person name="Irie R."/>
            <person name="Wakamatsu A."/>
            <person name="Hayashi K."/>
            <person name="Sato H."/>
            <person name="Nagai K."/>
            <person name="Kimura K."/>
            <person name="Makita H."/>
            <person name="Sekine M."/>
            <person name="Obayashi M."/>
            <person name="Nishi T."/>
            <person name="Shibahara T."/>
            <person name="Tanaka T."/>
            <person name="Ishii S."/>
            <person name="Yamamoto J."/>
            <person name="Saito K."/>
            <person name="Kawai Y."/>
            <person name="Isono Y."/>
            <person name="Nakamura Y."/>
            <person name="Nagahari K."/>
            <person name="Murakami K."/>
            <person name="Yasuda T."/>
            <person name="Iwayanagi T."/>
            <person name="Wagatsuma M."/>
            <person name="Shiratori A."/>
            <person name="Sudo H."/>
            <person name="Hosoiri T."/>
            <person name="Kaku Y."/>
            <person name="Kodaira H."/>
            <person name="Kondo H."/>
            <person name="Sugawara M."/>
            <person name="Takahashi M."/>
            <person name="Kanda K."/>
            <person name="Yokoi T."/>
            <person name="Furuya T."/>
            <person name="Kikkawa E."/>
            <person name="Omura Y."/>
            <person name="Abe K."/>
            <person name="Kamihara K."/>
            <person name="Katsuta N."/>
            <person name="Sato K."/>
            <person name="Tanikawa M."/>
            <person name="Yamazaki M."/>
            <person name="Ninomiya K."/>
            <person name="Ishibashi T."/>
            <person name="Yamashita H."/>
            <person name="Murakawa K."/>
            <person name="Fujimori K."/>
            <person name="Tanai H."/>
            <person name="Kimata M."/>
            <person name="Watanabe M."/>
            <person name="Hiraoka S."/>
            <person name="Chiba Y."/>
            <person name="Ishida S."/>
            <person name="Ono Y."/>
            <person name="Takiguchi S."/>
            <person name="Watanabe S."/>
            <person name="Yosida M."/>
            <person name="Hotuta T."/>
            <person name="Kusano J."/>
            <person name="Kanehori K."/>
            <person name="Takahashi-Fujii A."/>
            <person name="Hara H."/>
            <person name="Tanase T.-O."/>
            <person name="Nomura Y."/>
            <person name="Togiya S."/>
            <person name="Komai F."/>
            <person name="Hara R."/>
            <person name="Takeuchi K."/>
            <person name="Arita M."/>
            <person name="Imose N."/>
            <person name="Musashino K."/>
            <person name="Yuuki H."/>
            <person name="Oshima A."/>
            <person name="Sasaki N."/>
            <person name="Aotsuka S."/>
            <person name="Yoshikawa Y."/>
            <person name="Matsunawa H."/>
            <person name="Ichihara T."/>
            <person name="Shiohata N."/>
            <person name="Sano S."/>
            <person name="Moriya S."/>
            <person name="Momiyama H."/>
            <person name="Satoh N."/>
            <person name="Takami S."/>
            <person name="Terashima Y."/>
            <person name="Suzuki O."/>
            <person name="Nakagawa S."/>
            <person name="Senoh A."/>
            <person name="Mizoguchi H."/>
            <person name="Goto Y."/>
            <person name="Shimizu F."/>
            <person name="Wakebe H."/>
            <person name="Hishigaki H."/>
            <person name="Watanabe T."/>
            <person name="Sugiyama A."/>
            <person name="Takemoto M."/>
            <person name="Kawakami B."/>
            <person name="Yamazaki M."/>
            <person name="Watanabe K."/>
            <person name="Kumagai A."/>
            <person name="Itakura S."/>
            <person name="Fukuzumi Y."/>
            <person name="Fujimori Y."/>
            <person name="Komiyama M."/>
            <person name="Tashiro H."/>
            <person name="Tanigami A."/>
            <person name="Fujiwara T."/>
            <person name="Ono T."/>
            <person name="Yamada K."/>
            <person name="Fujii Y."/>
            <person name="Ozaki K."/>
            <person name="Hirao M."/>
            <person name="Ohmori Y."/>
            <person name="Kawabata A."/>
            <person name="Hikiji T."/>
            <person name="Kobatake N."/>
            <person name="Inagaki H."/>
            <person name="Ikema Y."/>
            <person name="Okamoto S."/>
            <person name="Okitani R."/>
            <person name="Kawakami T."/>
            <person name="Noguchi S."/>
            <person name="Itoh T."/>
            <person name="Shigeta K."/>
            <person name="Senba T."/>
            <person name="Matsumura K."/>
            <person name="Nakajima Y."/>
            <person name="Mizuno T."/>
            <person name="Morinaga M."/>
            <person name="Sasaki M."/>
            <person name="Togashi T."/>
            <person name="Oyama M."/>
            <person name="Hata H."/>
            <person name="Watanabe M."/>
            <person name="Komatsu T."/>
            <person name="Mizushima-Sugano J."/>
            <person name="Satoh T."/>
            <person name="Shirai Y."/>
            <person name="Takahashi Y."/>
            <person name="Nakagawa K."/>
            <person name="Okumura K."/>
            <person name="Nagase T."/>
            <person name="Nomura N."/>
            <person name="Kikuchi H."/>
            <person name="Masuho Y."/>
            <person name="Yamashita R."/>
            <person name="Nakai K."/>
            <person name="Yada T."/>
            <person name="Nakamura Y."/>
            <person name="Ohara O."/>
            <person name="Isogai T."/>
            <person name="Sugano S."/>
        </authorList>
    </citation>
    <scope>NUCLEOTIDE SEQUENCE [LARGE SCALE MRNA] (ISOFORMS 1; 3 AND 4)</scope>
    <source>
        <tissue>Brain</tissue>
        <tissue>Cerebellum</tissue>
        <tissue>Hippocampus</tissue>
        <tissue>Placenta</tissue>
    </source>
</reference>
<reference key="2">
    <citation type="journal article" date="2004" name="Nature">
        <title>The sequence and analysis of duplication-rich human chromosome 16.</title>
        <authorList>
            <person name="Martin J."/>
            <person name="Han C."/>
            <person name="Gordon L.A."/>
            <person name="Terry A."/>
            <person name="Prabhakar S."/>
            <person name="She X."/>
            <person name="Xie G."/>
            <person name="Hellsten U."/>
            <person name="Chan Y.M."/>
            <person name="Altherr M."/>
            <person name="Couronne O."/>
            <person name="Aerts A."/>
            <person name="Bajorek E."/>
            <person name="Black S."/>
            <person name="Blumer H."/>
            <person name="Branscomb E."/>
            <person name="Brown N.C."/>
            <person name="Bruno W.J."/>
            <person name="Buckingham J.M."/>
            <person name="Callen D.F."/>
            <person name="Campbell C.S."/>
            <person name="Campbell M.L."/>
            <person name="Campbell E.W."/>
            <person name="Caoile C."/>
            <person name="Challacombe J.F."/>
            <person name="Chasteen L.A."/>
            <person name="Chertkov O."/>
            <person name="Chi H.C."/>
            <person name="Christensen M."/>
            <person name="Clark L.M."/>
            <person name="Cohn J.D."/>
            <person name="Denys M."/>
            <person name="Detter J.C."/>
            <person name="Dickson M."/>
            <person name="Dimitrijevic-Bussod M."/>
            <person name="Escobar J."/>
            <person name="Fawcett J.J."/>
            <person name="Flowers D."/>
            <person name="Fotopulos D."/>
            <person name="Glavina T."/>
            <person name="Gomez M."/>
            <person name="Gonzales E."/>
            <person name="Goodstein D."/>
            <person name="Goodwin L.A."/>
            <person name="Grady D.L."/>
            <person name="Grigoriev I."/>
            <person name="Groza M."/>
            <person name="Hammon N."/>
            <person name="Hawkins T."/>
            <person name="Haydu L."/>
            <person name="Hildebrand C.E."/>
            <person name="Huang W."/>
            <person name="Israni S."/>
            <person name="Jett J."/>
            <person name="Jewett P.B."/>
            <person name="Kadner K."/>
            <person name="Kimball H."/>
            <person name="Kobayashi A."/>
            <person name="Krawczyk M.-C."/>
            <person name="Leyba T."/>
            <person name="Longmire J.L."/>
            <person name="Lopez F."/>
            <person name="Lou Y."/>
            <person name="Lowry S."/>
            <person name="Ludeman T."/>
            <person name="Manohar C.F."/>
            <person name="Mark G.A."/>
            <person name="McMurray K.L."/>
            <person name="Meincke L.J."/>
            <person name="Morgan J."/>
            <person name="Moyzis R.K."/>
            <person name="Mundt M.O."/>
            <person name="Munk A.C."/>
            <person name="Nandkeshwar R.D."/>
            <person name="Pitluck S."/>
            <person name="Pollard M."/>
            <person name="Predki P."/>
            <person name="Parson-Quintana B."/>
            <person name="Ramirez L."/>
            <person name="Rash S."/>
            <person name="Retterer J."/>
            <person name="Ricke D.O."/>
            <person name="Robinson D.L."/>
            <person name="Rodriguez A."/>
            <person name="Salamov A."/>
            <person name="Saunders E.H."/>
            <person name="Scott D."/>
            <person name="Shough T."/>
            <person name="Stallings R.L."/>
            <person name="Stalvey M."/>
            <person name="Sutherland R.D."/>
            <person name="Tapia R."/>
            <person name="Tesmer J.G."/>
            <person name="Thayer N."/>
            <person name="Thompson L.S."/>
            <person name="Tice H."/>
            <person name="Torney D.C."/>
            <person name="Tran-Gyamfi M."/>
            <person name="Tsai M."/>
            <person name="Ulanovsky L.E."/>
            <person name="Ustaszewska A."/>
            <person name="Vo N."/>
            <person name="White P.S."/>
            <person name="Williams A.L."/>
            <person name="Wills P.L."/>
            <person name="Wu J.-R."/>
            <person name="Wu K."/>
            <person name="Yang J."/>
            <person name="DeJong P."/>
            <person name="Bruce D."/>
            <person name="Doggett N.A."/>
            <person name="Deaven L."/>
            <person name="Schmutz J."/>
            <person name="Grimwood J."/>
            <person name="Richardson P."/>
            <person name="Rokhsar D.S."/>
            <person name="Eichler E.E."/>
            <person name="Gilna P."/>
            <person name="Lucas S.M."/>
            <person name="Myers R.M."/>
            <person name="Rubin E.M."/>
            <person name="Pennacchio L.A."/>
        </authorList>
    </citation>
    <scope>NUCLEOTIDE SEQUENCE [LARGE SCALE GENOMIC DNA]</scope>
</reference>
<reference key="3">
    <citation type="journal article" date="2001" name="DNA Res.">
        <title>Prediction of the coding sequences of unidentified human genes. XXI. The complete sequences of 60 new cDNA clones from brain which code for large proteins.</title>
        <authorList>
            <person name="Nagase T."/>
            <person name="Kikuno R."/>
            <person name="Ohara O."/>
        </authorList>
    </citation>
    <scope>NUCLEOTIDE SEQUENCE [LARGE SCALE MRNA] OF 7-1223 (ISOFORM 2)</scope>
    <source>
        <tissue>Brain</tissue>
    </source>
</reference>
<reference key="4">
    <citation type="journal article" date="2004" name="Genome Res.">
        <title>The status, quality, and expansion of the NIH full-length cDNA project: the Mammalian Gene Collection (MGC).</title>
        <authorList>
            <consortium name="The MGC Project Team"/>
        </authorList>
    </citation>
    <scope>NUCLEOTIDE SEQUENCE [LARGE SCALE MRNA] OF 152-1223 (ISOFORM 1)</scope>
    <source>
        <tissue>Cervix</tissue>
        <tissue>Colon</tissue>
        <tissue>Uterus</tissue>
    </source>
</reference>
<reference key="5">
    <citation type="journal article" date="2007" name="BMC Genomics">
        <title>The full-ORF clone resource of the German cDNA consortium.</title>
        <authorList>
            <person name="Bechtel S."/>
            <person name="Rosenfelder H."/>
            <person name="Duda A."/>
            <person name="Schmidt C.P."/>
            <person name="Ernst U."/>
            <person name="Wellenreuther R."/>
            <person name="Mehrle A."/>
            <person name="Schuster C."/>
            <person name="Bahr A."/>
            <person name="Bloecker H."/>
            <person name="Heubner D."/>
            <person name="Hoerlein A."/>
            <person name="Michel G."/>
            <person name="Wedler H."/>
            <person name="Koehrer K."/>
            <person name="Ottenwaelder B."/>
            <person name="Poustka A."/>
            <person name="Wiemann S."/>
            <person name="Schupp I."/>
        </authorList>
    </citation>
    <scope>NUCLEOTIDE SEQUENCE [LARGE SCALE MRNA] OF 276-1223 (ISOFORM 1)</scope>
    <source>
        <tissue>Testis</tissue>
    </source>
</reference>
<reference key="6">
    <citation type="journal article" date="2006" name="Nat. Biotechnol.">
        <title>A probability-based approach for high-throughput protein phosphorylation analysis and site localization.</title>
        <authorList>
            <person name="Beausoleil S.A."/>
            <person name="Villen J."/>
            <person name="Gerber S.A."/>
            <person name="Rush J."/>
            <person name="Gygi S.P."/>
        </authorList>
    </citation>
    <scope>IDENTIFICATION BY MASS SPECTROMETRY [LARGE SCALE ANALYSIS]</scope>
    <source>
        <tissue>Cervix carcinoma</tissue>
    </source>
</reference>
<reference key="7">
    <citation type="journal article" date="2008" name="Proc. Natl. Acad. Sci. U.S.A.">
        <title>A quantitative atlas of mitotic phosphorylation.</title>
        <authorList>
            <person name="Dephoure N."/>
            <person name="Zhou C."/>
            <person name="Villen J."/>
            <person name="Beausoleil S.A."/>
            <person name="Bakalarski C.E."/>
            <person name="Elledge S.J."/>
            <person name="Gygi S.P."/>
        </authorList>
    </citation>
    <scope>PHOSPHORYLATION [LARGE SCALE ANALYSIS] AT SER-349; SER-351 AND THR-355</scope>
    <scope>IDENTIFICATION BY MASS SPECTROMETRY [LARGE SCALE ANALYSIS]</scope>
    <source>
        <tissue>Cervix carcinoma</tissue>
    </source>
</reference>
<reference key="8">
    <citation type="journal article" date="2010" name="Sci. Signal.">
        <title>Quantitative phosphoproteomics reveals widespread full phosphorylation site occupancy during mitosis.</title>
        <authorList>
            <person name="Olsen J.V."/>
            <person name="Vermeulen M."/>
            <person name="Santamaria A."/>
            <person name="Kumar C."/>
            <person name="Miller M.L."/>
            <person name="Jensen L.J."/>
            <person name="Gnad F."/>
            <person name="Cox J."/>
            <person name="Jensen T.S."/>
            <person name="Nigg E.A."/>
            <person name="Brunak S."/>
            <person name="Mann M."/>
        </authorList>
    </citation>
    <scope>PHOSPHORYLATION [LARGE SCALE ANALYSIS] AT SER-351</scope>
    <scope>IDENTIFICATION BY MASS SPECTROMETRY [LARGE SCALE ANALYSIS]</scope>
    <source>
        <tissue>Cervix carcinoma</tissue>
    </source>
</reference>
<reference key="9">
    <citation type="journal article" date="2013" name="J. Proteome Res.">
        <title>Toward a comprehensive characterization of a human cancer cell phosphoproteome.</title>
        <authorList>
            <person name="Zhou H."/>
            <person name="Di Palma S."/>
            <person name="Preisinger C."/>
            <person name="Peng M."/>
            <person name="Polat A.N."/>
            <person name="Heck A.J."/>
            <person name="Mohammed S."/>
        </authorList>
    </citation>
    <scope>PHOSPHORYLATION [LARGE SCALE ANALYSIS] AT SER-22 AND SER-351</scope>
    <scope>IDENTIFICATION BY MASS SPECTROMETRY [LARGE SCALE ANALYSIS]</scope>
    <source>
        <tissue>Cervix carcinoma</tissue>
        <tissue>Erythroleukemia</tissue>
    </source>
</reference>
<reference key="10">
    <citation type="journal article" date="2014" name="J. Proteomics">
        <title>An enzyme assisted RP-RPLC approach for in-depth analysis of human liver phosphoproteome.</title>
        <authorList>
            <person name="Bian Y."/>
            <person name="Song C."/>
            <person name="Cheng K."/>
            <person name="Dong M."/>
            <person name="Wang F."/>
            <person name="Huang J."/>
            <person name="Sun D."/>
            <person name="Wang L."/>
            <person name="Ye M."/>
            <person name="Zou H."/>
        </authorList>
    </citation>
    <scope>IDENTIFICATION BY MASS SPECTROMETRY [LARGE SCALE ANALYSIS]</scope>
    <source>
        <tissue>Liver</tissue>
    </source>
</reference>
<reference key="11">
    <citation type="journal article" date="2016" name="J. Cell Sci.">
        <title>RHO binding to FAM65A regulates Golgi reorientation during cell migration.</title>
        <authorList>
            <person name="Mardakheh F.K."/>
            <person name="Self A."/>
            <person name="Marshall C.J."/>
        </authorList>
    </citation>
    <scope>FUNCTION</scope>
    <scope>INTERACTION WITH PDCD10; RHOA; RHOB; RHOC; STK24; STK26 AND 14-3-3 PROTEINS</scope>
    <scope>SUBCELLULAR LOCATION</scope>
    <scope>IDENTIFICATION BY MASS SPECTROMETRY</scope>
</reference>
<sequence>MMSLSVRPQRRLLSARVNRSQSFAGVLGSHERGPSLSFRSFPVFSPPGPPRKPPALSRVSRMFSVAHPAAKVPQPERLDLVYTALKRGLTAYLEVHQQEQEKLQGQIRESKRNSRLGFLYDLDKQVKSIERFLRRLEFHASKIDELYEAYCVQRRLRDGAYNMVRAYTTGSPGSREARDSLAEATRGHREYTESMCLLESELEAQLGEFHLRMKGLAGFARLCVGDQYEICMKYGRQRWKLRGRIEGSGKQVWDSEETIFLPLLTEFLSIKVTELKGLANHVVVGSVSCETKDLFAALPQVVAVDINDLGTIKLSLEVTWSPFDKDDQPSAASSVNKASTVTKRFSTYSQSPPDTPSLREQAFYNMLRRQEELENGTAWSLSSESSDDSSSPQLSGTARHSPAPRPLVQQPEPLPIQVAFRRPETPSSGPLDEEGAVAPVLANGHAPYSRTLSHISEASVDAALAEASVEAVGPESLAWGPSPPTHPAPTHGEHPSPVPPALDPGHSATSSTLGTTGSVPTSTDPAPSAHLDSVHKSTDSGPSELPGPTHTTTGSTYSAITTTHSAPSPLTHTTTGSTHKPIISTLTTTGPTLNIIGPVQTTTSPTHTMPSPTHTTASPTHTSTSPTHTPTSPTHKTSMSPPTTTSPTPSGMGLVQTATSPTHPTTSPTHPTTSPILINVSPSTSLELATLSSPSKHSDPTLPGTDSLPCSPPVSNSYTQADPMAPRTPHPSPAHSSRKPLTSPAPDPSESTVQSLSPTPSPPTPAPQHSDLCLAMAVQTPVPTAAGGSGDRSLEEALGALMAALDDYRGQFPELQGLEQEVTRLESLLMQRQGLTRSRASSLSITVEHALESFSFLNEDEDEDNDVPGDRPPSSPEAGAEDSIDSPSARPLSTGCPALDAALVRHLYHCSRLLLKLGTFGPLRCQEAWALERLLREARVLEAVCEFSRRWEIPASSAQEVVQFSASRPGFLTFWDQCTERLSCFLCPVERVLLTFCNQYGARLSLRQPGLAEAVCVKFLEDALGQKLPRRPQPGPGEQLTVFQFWSFVETLDSPTMEAYVTETAEEVLLVRNLNSDDQAVVLKALRLAPEGRLRRDGLRALSSLLVHGNNKVMAAVSTQLRSLSLGPTFRERALLCFLDQLEDEDVQTRVAGCLALGCIKAPEGIEPLVYLCQTDTEAVREAARQSLQQCGEEGQSAHRRLEESLDALPRIFGPGSMASTAF</sequence>
<name>RIPR1_HUMAN</name>
<keyword id="KW-0025">Alternative splicing</keyword>
<keyword id="KW-0175">Coiled coil</keyword>
<keyword id="KW-0963">Cytoplasm</keyword>
<keyword id="KW-0333">Golgi apparatus</keyword>
<keyword id="KW-0597">Phosphoprotein</keyword>
<keyword id="KW-1267">Proteomics identification</keyword>
<keyword id="KW-1185">Reference proteome</keyword>